<proteinExistence type="evidence at protein level"/>
<keyword id="KW-0002">3D-structure</keyword>
<keyword id="KW-0175">Coiled coil</keyword>
<keyword id="KW-0227">DNA damage</keyword>
<keyword id="KW-0235">DNA replication</keyword>
<keyword id="KW-0238">DNA-binding</keyword>
<keyword id="KW-0479">Metal-binding</keyword>
<keyword id="KW-0539">Nucleus</keyword>
<keyword id="KW-1185">Reference proteome</keyword>
<keyword id="KW-0862">Zinc</keyword>
<keyword id="KW-0863">Zinc-finger</keyword>
<accession>Q5EAW4</accession>
<accession>Q9DEX0</accession>
<feature type="chain" id="PRO_0000278323" description="Protein MCM10 homolog">
    <location>
        <begin position="1"/>
        <end position="860"/>
    </location>
</feature>
<feature type="region of interest" description="N-terminal domain">
    <location>
        <begin position="1"/>
        <end position="145"/>
    </location>
</feature>
<feature type="region of interest" description="Disordered" evidence="3">
    <location>
        <begin position="18"/>
        <end position="225"/>
    </location>
</feature>
<feature type="region of interest" description="OB-fold domain">
    <location>
        <begin position="230"/>
        <end position="380"/>
    </location>
</feature>
<feature type="region of interest" description="Zinc finger-like 1">
    <location>
        <begin position="381"/>
        <end position="406"/>
    </location>
</feature>
<feature type="region of interest" description="Disordered" evidence="3">
    <location>
        <begin position="553"/>
        <end position="591"/>
    </location>
</feature>
<feature type="region of interest" description="C-terminal domain">
    <location>
        <begin position="596"/>
        <end position="860"/>
    </location>
</feature>
<feature type="region of interest" description="Disordered" evidence="3">
    <location>
        <begin position="657"/>
        <end position="700"/>
    </location>
</feature>
<feature type="region of interest" description="Zinc finger-like 2">
    <location>
        <begin position="768"/>
        <end position="787"/>
    </location>
</feature>
<feature type="region of interest" description="Zinc finger-like 3">
    <location>
        <begin position="801"/>
        <end position="821"/>
    </location>
</feature>
<feature type="coiled-coil region" evidence="2">
    <location>
        <begin position="93"/>
        <end position="131"/>
    </location>
</feature>
<feature type="compositionally biased region" description="Acidic residues" evidence="3">
    <location>
        <begin position="32"/>
        <end position="46"/>
    </location>
</feature>
<feature type="compositionally biased region" description="Acidic residues" evidence="3">
    <location>
        <begin position="64"/>
        <end position="84"/>
    </location>
</feature>
<feature type="compositionally biased region" description="Basic and acidic residues" evidence="3">
    <location>
        <begin position="98"/>
        <end position="110"/>
    </location>
</feature>
<feature type="compositionally biased region" description="Polar residues" evidence="3">
    <location>
        <begin position="120"/>
        <end position="134"/>
    </location>
</feature>
<feature type="compositionally biased region" description="Polar residues" evidence="3">
    <location>
        <begin position="144"/>
        <end position="154"/>
    </location>
</feature>
<feature type="compositionally biased region" description="Polar residues" evidence="3">
    <location>
        <begin position="164"/>
        <end position="175"/>
    </location>
</feature>
<feature type="compositionally biased region" description="Polar residues" evidence="3">
    <location>
        <begin position="214"/>
        <end position="225"/>
    </location>
</feature>
<feature type="compositionally biased region" description="Basic and acidic residues" evidence="3">
    <location>
        <begin position="565"/>
        <end position="582"/>
    </location>
</feature>
<feature type="mutagenesis site" description="10-fold reduction in ssDNA binding affinity; when associated with E-386." evidence="6">
    <original>K</original>
    <variation>E</variation>
    <location>
        <position position="385"/>
    </location>
</feature>
<feature type="mutagenesis site" description="10-fold reduction in ssDNA binding affinity; when associated with E-385." evidence="6">
    <original>K</original>
    <variation>E</variation>
    <location>
        <position position="386"/>
    </location>
</feature>
<feature type="sequence conflict" description="In Ref. 3; AAH90220." evidence="7" ref="3">
    <original>Q</original>
    <variation>P</variation>
    <location>
        <position position="189"/>
    </location>
</feature>
<feature type="sequence conflict" description="In Ref. 3; AAH90220." evidence="7" ref="3">
    <original>H</original>
    <variation>R</variation>
    <location>
        <position position="740"/>
    </location>
</feature>
<feature type="sequence conflict" description="In Ref. 3; AAH90220." evidence="7" ref="3">
    <original>D</original>
    <variation>Y</variation>
    <location>
        <position position="788"/>
    </location>
</feature>
<feature type="helix" evidence="11">
    <location>
        <begin position="98"/>
        <end position="120"/>
    </location>
</feature>
<feature type="turn" evidence="9">
    <location>
        <begin position="240"/>
        <end position="242"/>
    </location>
</feature>
<feature type="strand" evidence="9">
    <location>
        <begin position="245"/>
        <end position="248"/>
    </location>
</feature>
<feature type="helix" evidence="9">
    <location>
        <begin position="253"/>
        <end position="260"/>
    </location>
</feature>
<feature type="helix" evidence="9">
    <location>
        <begin position="268"/>
        <end position="270"/>
    </location>
</feature>
<feature type="helix" evidence="9">
    <location>
        <begin position="271"/>
        <end position="276"/>
    </location>
</feature>
<feature type="strand" evidence="9">
    <location>
        <begin position="285"/>
        <end position="295"/>
    </location>
</feature>
<feature type="strand" evidence="10">
    <location>
        <begin position="301"/>
        <end position="303"/>
    </location>
</feature>
<feature type="strand" evidence="9">
    <location>
        <begin position="307"/>
        <end position="312"/>
    </location>
</feature>
<feature type="strand" evidence="9">
    <location>
        <begin position="314"/>
        <end position="316"/>
    </location>
</feature>
<feature type="strand" evidence="9">
    <location>
        <begin position="321"/>
        <end position="325"/>
    </location>
</feature>
<feature type="helix" evidence="9">
    <location>
        <begin position="327"/>
        <end position="333"/>
    </location>
</feature>
<feature type="strand" evidence="9">
    <location>
        <begin position="340"/>
        <end position="346"/>
    </location>
</feature>
<feature type="strand" evidence="9">
    <location>
        <begin position="359"/>
        <end position="362"/>
    </location>
</feature>
<feature type="helix" evidence="9">
    <location>
        <begin position="366"/>
        <end position="368"/>
    </location>
</feature>
<feature type="strand" evidence="9">
    <location>
        <begin position="369"/>
        <end position="375"/>
    </location>
</feature>
<feature type="strand" evidence="9">
    <location>
        <begin position="378"/>
        <end position="380"/>
    </location>
</feature>
<feature type="strand" evidence="9">
    <location>
        <begin position="382"/>
        <end position="384"/>
    </location>
</feature>
<feature type="strand" evidence="10">
    <location>
        <begin position="388"/>
        <end position="390"/>
    </location>
</feature>
<feature type="strand" evidence="9">
    <location>
        <begin position="394"/>
        <end position="396"/>
    </location>
</feature>
<feature type="turn" evidence="9">
    <location>
        <begin position="397"/>
        <end position="399"/>
    </location>
</feature>
<feature type="helix" evidence="9">
    <location>
        <begin position="404"/>
        <end position="411"/>
    </location>
</feature>
<feature type="helix" evidence="9">
    <location>
        <begin position="414"/>
        <end position="417"/>
    </location>
</feature>
<feature type="strand" evidence="8">
    <location>
        <begin position="762"/>
        <end position="768"/>
    </location>
</feature>
<feature type="turn" evidence="8">
    <location>
        <begin position="769"/>
        <end position="771"/>
    </location>
</feature>
<feature type="strand" evidence="8">
    <location>
        <begin position="774"/>
        <end position="777"/>
    </location>
</feature>
<feature type="helix" evidence="8">
    <location>
        <begin position="780"/>
        <end position="784"/>
    </location>
</feature>
<feature type="strand" evidence="8">
    <location>
        <begin position="789"/>
        <end position="795"/>
    </location>
</feature>
<feature type="strand" evidence="8">
    <location>
        <begin position="797"/>
        <end position="800"/>
    </location>
</feature>
<feature type="strand" evidence="8">
    <location>
        <begin position="806"/>
        <end position="813"/>
    </location>
</feature>
<feature type="turn" evidence="8">
    <location>
        <begin position="819"/>
        <end position="821"/>
    </location>
</feature>
<feature type="strand" evidence="8">
    <location>
        <begin position="827"/>
        <end position="829"/>
    </location>
</feature>
<feature type="strand" evidence="8">
    <location>
        <begin position="833"/>
        <end position="835"/>
    </location>
</feature>
<sequence length="860" mass="95417">MEVDADLELLTSLLEENEAAERNGVVSHEASSELDEFDELFDGDEDGSYHGSDNGTEEQTIGGVEEDFTTLFGDIDDIKEEEAAASDTKKQSSSVCQEKSKDELEDELRKMQAQMKKLQEQLQKTALAKTSSPGNPKKSPENKMVQSGKTSRTSPLIERKKTDSNTVAPQLTSPTVPKAKLPDAPKRKQNLSDKSPVQKKMASFLSPPEKSSARPGQSTATQPITNTLKSPVGQQYHVEKFSGLRIRKPRVSSSEMERKMNGRKLIRLAQLQNKIATEKLEEEDWVTFGVIVKKITPQSSNNGKTFSIWRLNDLKDLDKYISLFLFGDVHKEHWKTDQGTVIGLLNANPMKPKEGTDEVCLSVDNPQKVLLMGDAVDLGTCKARKKNGDPCTQMVNLNDCEYCQYHVQAQYKKVSSKRADLQSSYSGHVPKKMARGANGLRERLCQGGFHYGGVSSMAYAATLGSTTAPKKTVQSTLSNMVVRGAEAIALEARQKIAAAKNVVQTDEFKELMTLPTPGALNLKKHLSGVSPQANCGKEGQPIQSISASTLLKQQKQQMLNARKKRAEESQKRFLESTEKSEKSSTLTSSACSVFQSPKQGAEFPNAQKMATPKLGRGFAEGDDVLFFDISPPPAPKLSTSAEAKKLLAIQKLQAKGQTLAKTDPNSIKRKRGSSSEELVAQRVASHASTSPKSPDENEPAIKKHRDQLAYLESEEFQKILNAKSKHTGILKEAEVEIQEHYFDPLVKKEQLEEKMQSIREQSCRVVTCKTCKYTHFKPKETCVSENHDFHWHNGVKRFFKCPCGNRTISLDRLPKKHCSTCGLFKWERVGMLKEKTGPKLGGETLLPRGEEHGKFLNSLK</sequence>
<gene>
    <name type="primary">mcm10</name>
</gene>
<name>MCM10_XENLA</name>
<evidence type="ECO:0000250" key="1">
    <source>
        <dbReference type="UniProtKB" id="Q7L590"/>
    </source>
</evidence>
<evidence type="ECO:0000255" key="2"/>
<evidence type="ECO:0000256" key="3">
    <source>
        <dbReference type="SAM" id="MobiDB-lite"/>
    </source>
</evidence>
<evidence type="ECO:0000269" key="4">
    <source>
    </source>
</evidence>
<evidence type="ECO:0000269" key="5">
    <source>
    </source>
</evidence>
<evidence type="ECO:0000269" key="6">
    <source>
    </source>
</evidence>
<evidence type="ECO:0000305" key="7"/>
<evidence type="ECO:0007829" key="8">
    <source>
        <dbReference type="PDB" id="2KWQ"/>
    </source>
</evidence>
<evidence type="ECO:0007829" key="9">
    <source>
        <dbReference type="PDB" id="3EBE"/>
    </source>
</evidence>
<evidence type="ECO:0007829" key="10">
    <source>
        <dbReference type="PDB" id="3H15"/>
    </source>
</evidence>
<evidence type="ECO:0007829" key="11">
    <source>
        <dbReference type="PDB" id="4JBZ"/>
    </source>
</evidence>
<dbReference type="EMBL" id="AF314535">
    <property type="protein sequence ID" value="AAG33858.1"/>
    <property type="molecule type" value="mRNA"/>
</dbReference>
<dbReference type="EMBL" id="BC070548">
    <property type="protein sequence ID" value="AAH70548.1"/>
    <property type="molecule type" value="mRNA"/>
</dbReference>
<dbReference type="EMBL" id="BC090220">
    <property type="protein sequence ID" value="AAH90220.1"/>
    <property type="molecule type" value="mRNA"/>
</dbReference>
<dbReference type="RefSeq" id="NP_001082047.1">
    <property type="nucleotide sequence ID" value="NM_001088578.1"/>
</dbReference>
<dbReference type="PDB" id="2KWQ">
    <property type="method" value="NMR"/>
    <property type="chains" value="A=755-842"/>
</dbReference>
<dbReference type="PDB" id="3EBE">
    <property type="method" value="X-ray"/>
    <property type="resolution" value="2.30 A"/>
    <property type="chains" value="A/B/C=230-427"/>
</dbReference>
<dbReference type="PDB" id="3H15">
    <property type="method" value="X-ray"/>
    <property type="resolution" value="2.72 A"/>
    <property type="chains" value="A=230-427"/>
</dbReference>
<dbReference type="PDB" id="4JBZ">
    <property type="method" value="X-ray"/>
    <property type="resolution" value="2.40 A"/>
    <property type="chains" value="A/B/C=95-124"/>
</dbReference>
<dbReference type="PDBsum" id="2KWQ"/>
<dbReference type="PDBsum" id="3EBE"/>
<dbReference type="PDBsum" id="3H15"/>
<dbReference type="PDBsum" id="4JBZ"/>
<dbReference type="BMRB" id="Q5EAW4"/>
<dbReference type="SMR" id="Q5EAW4"/>
<dbReference type="BioGRID" id="99531">
    <property type="interactions" value="1"/>
</dbReference>
<dbReference type="DNASU" id="398196"/>
<dbReference type="GeneID" id="398196"/>
<dbReference type="KEGG" id="xla:398196"/>
<dbReference type="AGR" id="Xenbase:XB-GENE-1015396"/>
<dbReference type="CTD" id="398196"/>
<dbReference type="Xenbase" id="XB-GENE-1015396">
    <property type="gene designation" value="mcm10.L"/>
</dbReference>
<dbReference type="OrthoDB" id="273123at2759"/>
<dbReference type="EvolutionaryTrace" id="Q5EAW4"/>
<dbReference type="Proteomes" id="UP000186698">
    <property type="component" value="Chromosome 3L"/>
</dbReference>
<dbReference type="Bgee" id="398196">
    <property type="expression patterns" value="Expressed in egg cell and 15 other cell types or tissues"/>
</dbReference>
<dbReference type="GO" id="GO:0043596">
    <property type="term" value="C:nuclear replication fork"/>
    <property type="evidence" value="ECO:0000318"/>
    <property type="project" value="GO_Central"/>
</dbReference>
<dbReference type="GO" id="GO:0005634">
    <property type="term" value="C:nucleus"/>
    <property type="evidence" value="ECO:0000250"/>
    <property type="project" value="UniProtKB"/>
</dbReference>
<dbReference type="GO" id="GO:0003688">
    <property type="term" value="F:DNA replication origin binding"/>
    <property type="evidence" value="ECO:0000318"/>
    <property type="project" value="GO_Central"/>
</dbReference>
<dbReference type="GO" id="GO:0003697">
    <property type="term" value="F:single-stranded DNA binding"/>
    <property type="evidence" value="ECO:0000318"/>
    <property type="project" value="GO_Central"/>
</dbReference>
<dbReference type="GO" id="GO:0008270">
    <property type="term" value="F:zinc ion binding"/>
    <property type="evidence" value="ECO:0007669"/>
    <property type="project" value="UniProtKB-KW"/>
</dbReference>
<dbReference type="GO" id="GO:0006974">
    <property type="term" value="P:DNA damage response"/>
    <property type="evidence" value="ECO:0007669"/>
    <property type="project" value="UniProtKB-KW"/>
</dbReference>
<dbReference type="GO" id="GO:0006270">
    <property type="term" value="P:DNA replication initiation"/>
    <property type="evidence" value="ECO:0000318"/>
    <property type="project" value="GO_Central"/>
</dbReference>
<dbReference type="FunFam" id="1.20.5.420:FF:000017">
    <property type="entry name" value="Maltose/maltodextrin-binding periplasmic protein"/>
    <property type="match status" value="1"/>
</dbReference>
<dbReference type="FunFam" id="2.40.50.140:FF:000167">
    <property type="entry name" value="Minichromosome maintenance 10 replication initiation factor"/>
    <property type="match status" value="1"/>
</dbReference>
<dbReference type="Gene3D" id="1.20.5.420">
    <property type="entry name" value="Immunoglobulin FC, subunit C"/>
    <property type="match status" value="1"/>
</dbReference>
<dbReference type="Gene3D" id="2.40.50.140">
    <property type="entry name" value="Nucleic acid-binding proteins"/>
    <property type="match status" value="1"/>
</dbReference>
<dbReference type="InterPro" id="IPR040184">
    <property type="entry name" value="Mcm10"/>
</dbReference>
<dbReference type="InterPro" id="IPR055065">
    <property type="entry name" value="MCM10_OB"/>
</dbReference>
<dbReference type="InterPro" id="IPR012340">
    <property type="entry name" value="NA-bd_OB-fold"/>
</dbReference>
<dbReference type="InterPro" id="IPR015411">
    <property type="entry name" value="Rep_factor_Mcm10_C"/>
</dbReference>
<dbReference type="InterPro" id="IPR015408">
    <property type="entry name" value="Znf_Mcm10/DnaG"/>
</dbReference>
<dbReference type="InterPro" id="IPR056791">
    <property type="entry name" value="Znf_Mcm10_C"/>
</dbReference>
<dbReference type="PANTHER" id="PTHR13454">
    <property type="entry name" value="PROTEIN MCM10 HOMOLOG"/>
    <property type="match status" value="1"/>
</dbReference>
<dbReference type="PANTHER" id="PTHR13454:SF11">
    <property type="entry name" value="PROTEIN MCM10 HOMOLOG"/>
    <property type="match status" value="1"/>
</dbReference>
<dbReference type="Pfam" id="PF09332">
    <property type="entry name" value="Mcm10"/>
    <property type="match status" value="1"/>
</dbReference>
<dbReference type="Pfam" id="PF22379">
    <property type="entry name" value="MCM10_OB"/>
    <property type="match status" value="1"/>
</dbReference>
<dbReference type="Pfam" id="PF24863">
    <property type="entry name" value="zf-CCCH_Mcm10"/>
    <property type="match status" value="1"/>
</dbReference>
<dbReference type="Pfam" id="PF09329">
    <property type="entry name" value="zf-primase"/>
    <property type="match status" value="1"/>
</dbReference>
<dbReference type="SMART" id="SM01280">
    <property type="entry name" value="Mcm10"/>
    <property type="match status" value="1"/>
</dbReference>
<protein>
    <recommendedName>
        <fullName>Protein MCM10 homolog</fullName>
    </recommendedName>
</protein>
<organism>
    <name type="scientific">Xenopus laevis</name>
    <name type="common">African clawed frog</name>
    <dbReference type="NCBI Taxonomy" id="8355"/>
    <lineage>
        <taxon>Eukaryota</taxon>
        <taxon>Metazoa</taxon>
        <taxon>Chordata</taxon>
        <taxon>Craniata</taxon>
        <taxon>Vertebrata</taxon>
        <taxon>Euteleostomi</taxon>
        <taxon>Amphibia</taxon>
        <taxon>Batrachia</taxon>
        <taxon>Anura</taxon>
        <taxon>Pipoidea</taxon>
        <taxon>Pipidae</taxon>
        <taxon>Xenopodinae</taxon>
        <taxon>Xenopus</taxon>
        <taxon>Xenopus</taxon>
    </lineage>
</organism>
<comment type="function">
    <text evidence="1 4">Acts as a replication initiation factor that brings together the MCM2-7 helicase and the DNA polymerase alpha/primase complex in order to initiate DNA replication. Additionally, plays a role in preventing DNA damage during replication (By similarity).</text>
</comment>
<comment type="subunit">
    <text evidence="6">Self-associates.</text>
</comment>
<comment type="subcellular location">
    <subcellularLocation>
        <location evidence="4">Nucleus</location>
    </subcellularLocation>
</comment>
<comment type="domain">
    <text evidence="5">Each zinc finger-like domain binds a zinc ion and is involved in both ssDNA and dsDNA binding, as is the OB-fold domain.</text>
</comment>
<comment type="domain">
    <text evidence="5">The N-terminal domain mediates homodimerization.</text>
</comment>
<comment type="similarity">
    <text evidence="7">Belongs to the MCM10 family.</text>
</comment>
<reference key="1">
    <citation type="journal article" date="2002" name="Mol. Cell">
        <title>Xenopus Mcm10 binds to origins of DNA replication after Mcm2-7 and stimulates origin binding of Cdc45.</title>
        <authorList>
            <person name="Wohlschlegel J.A."/>
            <person name="Dhar S.K."/>
            <person name="Prokhorova T.A."/>
            <person name="Dutta A."/>
            <person name="Walter J.C."/>
        </authorList>
    </citation>
    <scope>NUCLEOTIDE SEQUENCE [MRNA]</scope>
    <scope>FUNCTION</scope>
    <scope>SUBCELLULAR LOCATION</scope>
</reference>
<reference key="2">
    <citation type="submission" date="2000-10" db="EMBL/GenBank/DDBJ databases">
        <authorList>
            <person name="Utsumi H."/>
        </authorList>
    </citation>
    <scope>NUCLEOTIDE SEQUENCE [MRNA]</scope>
    <source>
        <tissue>Oocyte</tissue>
    </source>
</reference>
<reference key="3">
    <citation type="submission" date="2005-02" db="EMBL/GenBank/DDBJ databases">
        <authorList>
            <consortium name="NIH - Xenopus Gene Collection (XGC) project"/>
        </authorList>
    </citation>
    <scope>NUCLEOTIDE SEQUENCE [LARGE SCALE MRNA]</scope>
    <source>
        <tissue>Egg</tissue>
        <tissue>Embryo</tissue>
    </source>
</reference>
<reference key="4">
    <citation type="journal article" date="2008" name="J. Biol. Chem.">
        <title>Domain architecture and biochemical characterization of vertebrate Mcm10.</title>
        <authorList>
            <person name="Robertson P.D."/>
            <person name="Warren E.M."/>
            <person name="Zhang H."/>
            <person name="Friedman D.B."/>
            <person name="Lary J.W."/>
            <person name="Cole J.L."/>
            <person name="Tutter A.V."/>
            <person name="Walter J.C."/>
            <person name="Fanning E."/>
            <person name="Eichman B.F."/>
        </authorList>
    </citation>
    <scope>DOMAIN ARCHITECTURE</scope>
    <scope>DNA-BINDING</scope>
</reference>
<reference key="5">
    <citation type="journal article" date="2008" name="Structure">
        <title>Structural basis for DNA binding by replication initiator Mcm10.</title>
        <authorList>
            <person name="Warren E.M."/>
            <person name="Vaithiyalingam S."/>
            <person name="Haworth J."/>
            <person name="Greer B."/>
            <person name="Bielinsky A.K."/>
            <person name="Chazin W.J."/>
            <person name="Eichman B.F."/>
        </authorList>
    </citation>
    <scope>X-RAY CRYSTALLOGRAPHY (2.3 ANGSTROMS) OF 230-427</scope>
    <scope>DNA-BINDING</scope>
    <scope>SUBUNIT</scope>
    <scope>MUTAGENESIS OF LYS-385 AND LYS-386</scope>
</reference>
<reference key="6">
    <citation type="journal article" date="2010" name="J. Biol. Chem.">
        <title>Solution NMR structure of the C-terminal DNA binding domain of Mcm10 reveals a conserved MCM motif.</title>
        <authorList>
            <person name="Robertson P.D."/>
            <person name="Chagot B."/>
            <person name="Chazin W.J."/>
            <person name="Eichman B.F."/>
        </authorList>
    </citation>
    <scope>STRUCTURE BY NMR OF 755-842</scope>
    <scope>ZINC-FINGER-LIKE DOMAINS</scope>
    <scope>ZINC-BINDING</scope>
</reference>